<proteinExistence type="evidence at protein level"/>
<organism>
    <name type="scientific">Coxiella burnetii (strain RSA 493 / Nine Mile phase I)</name>
    <dbReference type="NCBI Taxonomy" id="227377"/>
    <lineage>
        <taxon>Bacteria</taxon>
        <taxon>Pseudomonadati</taxon>
        <taxon>Pseudomonadota</taxon>
        <taxon>Gammaproteobacteria</taxon>
        <taxon>Legionellales</taxon>
        <taxon>Coxiellaceae</taxon>
        <taxon>Coxiella</taxon>
    </lineage>
</organism>
<comment type="function">
    <text evidence="1">Attaches a formyl group to the free amino group of methionyl-tRNA(fMet). The formyl group appears to play a dual role in the initiator identity of N-formylmethionyl-tRNA by promoting its recognition by IF2 and preventing the misappropriation of this tRNA by the elongation apparatus.</text>
</comment>
<comment type="catalytic activity">
    <reaction evidence="1">
        <text>L-methionyl-tRNA(fMet) + (6R)-10-formyltetrahydrofolate = N-formyl-L-methionyl-tRNA(fMet) + (6S)-5,6,7,8-tetrahydrofolate + H(+)</text>
        <dbReference type="Rhea" id="RHEA:24380"/>
        <dbReference type="Rhea" id="RHEA-COMP:9952"/>
        <dbReference type="Rhea" id="RHEA-COMP:9953"/>
        <dbReference type="ChEBI" id="CHEBI:15378"/>
        <dbReference type="ChEBI" id="CHEBI:57453"/>
        <dbReference type="ChEBI" id="CHEBI:78530"/>
        <dbReference type="ChEBI" id="CHEBI:78844"/>
        <dbReference type="ChEBI" id="CHEBI:195366"/>
        <dbReference type="EC" id="2.1.2.9"/>
    </reaction>
</comment>
<comment type="similarity">
    <text evidence="1">Belongs to the Fmt family.</text>
</comment>
<feature type="chain" id="PRO_0000082955" description="Methionyl-tRNA formyltransferase">
    <location>
        <begin position="1"/>
        <end position="314"/>
    </location>
</feature>
<feature type="binding site" evidence="1">
    <location>
        <begin position="111"/>
        <end position="114"/>
    </location>
    <ligand>
        <name>(6S)-5,6,7,8-tetrahydrofolate</name>
        <dbReference type="ChEBI" id="CHEBI:57453"/>
    </ligand>
</feature>
<feature type="strand" evidence="2">
    <location>
        <begin position="4"/>
        <end position="9"/>
    </location>
</feature>
<feature type="helix" evidence="2">
    <location>
        <begin position="12"/>
        <end position="14"/>
    </location>
</feature>
<feature type="helix" evidence="2">
    <location>
        <begin position="15"/>
        <end position="23"/>
    </location>
</feature>
<feature type="strand" evidence="2">
    <location>
        <begin position="24"/>
        <end position="32"/>
    </location>
</feature>
<feature type="helix" evidence="2">
    <location>
        <begin position="49"/>
        <end position="56"/>
    </location>
</feature>
<feature type="strand" evidence="2">
    <location>
        <begin position="67"/>
        <end position="69"/>
    </location>
</feature>
<feature type="helix" evidence="2">
    <location>
        <begin position="70"/>
        <end position="77"/>
    </location>
</feature>
<feature type="strand" evidence="2">
    <location>
        <begin position="82"/>
        <end position="88"/>
    </location>
</feature>
<feature type="helix" evidence="2">
    <location>
        <begin position="95"/>
        <end position="98"/>
    </location>
</feature>
<feature type="strand" evidence="2">
    <location>
        <begin position="105"/>
        <end position="111"/>
    </location>
</feature>
<feature type="turn" evidence="2">
    <location>
        <begin position="113"/>
        <end position="116"/>
    </location>
</feature>
<feature type="strand" evidence="2">
    <location>
        <begin position="117"/>
        <end position="119"/>
    </location>
</feature>
<feature type="helix" evidence="2">
    <location>
        <begin position="121"/>
        <end position="128"/>
    </location>
</feature>
<feature type="strand" evidence="2">
    <location>
        <begin position="131"/>
        <end position="139"/>
    </location>
</feature>
<feature type="strand" evidence="2">
    <location>
        <begin position="142"/>
        <end position="145"/>
    </location>
</feature>
<feature type="strand" evidence="2">
    <location>
        <begin position="149"/>
        <end position="156"/>
    </location>
</feature>
<feature type="helix" evidence="2">
    <location>
        <begin position="163"/>
        <end position="187"/>
    </location>
</feature>
<feature type="helix" evidence="2">
    <location>
        <begin position="197"/>
        <end position="199"/>
    </location>
</feature>
<feature type="helix" evidence="2">
    <location>
        <begin position="208"/>
        <end position="211"/>
    </location>
</feature>
<feature type="helix" evidence="2">
    <location>
        <begin position="219"/>
        <end position="228"/>
    </location>
</feature>
<feature type="turn" evidence="2">
    <location>
        <begin position="229"/>
        <end position="233"/>
    </location>
</feature>
<feature type="strand" evidence="2">
    <location>
        <begin position="236"/>
        <end position="239"/>
    </location>
</feature>
<feature type="strand" evidence="2">
    <location>
        <begin position="242"/>
        <end position="252"/>
    </location>
</feature>
<feature type="strand" evidence="2">
    <location>
        <begin position="263"/>
        <end position="267"/>
    </location>
</feature>
<feature type="strand" evidence="2">
    <location>
        <begin position="270"/>
        <end position="274"/>
    </location>
</feature>
<feature type="strand" evidence="2">
    <location>
        <begin position="276"/>
        <end position="286"/>
    </location>
</feature>
<feature type="helix" evidence="2">
    <location>
        <begin position="295"/>
        <end position="302"/>
    </location>
</feature>
<feature type="helix" evidence="2">
    <location>
        <begin position="303"/>
        <end position="305"/>
    </location>
</feature>
<feature type="turn" evidence="2">
    <location>
        <begin position="308"/>
        <end position="310"/>
    </location>
</feature>
<reference key="1">
    <citation type="journal article" date="2003" name="Proc. Natl. Acad. Sci. U.S.A.">
        <title>Complete genome sequence of the Q-fever pathogen, Coxiella burnetii.</title>
        <authorList>
            <person name="Seshadri R."/>
            <person name="Paulsen I.T."/>
            <person name="Eisen J.A."/>
            <person name="Read T.D."/>
            <person name="Nelson K.E."/>
            <person name="Nelson W.C."/>
            <person name="Ward N.L."/>
            <person name="Tettelin H."/>
            <person name="Davidsen T.M."/>
            <person name="Beanan M.J."/>
            <person name="DeBoy R.T."/>
            <person name="Daugherty S.C."/>
            <person name="Brinkac L.M."/>
            <person name="Madupu R."/>
            <person name="Dodson R.J."/>
            <person name="Khouri H.M."/>
            <person name="Lee K.H."/>
            <person name="Carty H.A."/>
            <person name="Scanlan D."/>
            <person name="Heinzen R.A."/>
            <person name="Thompson H.A."/>
            <person name="Samuel J.E."/>
            <person name="Fraser C.M."/>
            <person name="Heidelberg J.F."/>
        </authorList>
    </citation>
    <scope>NUCLEOTIDE SEQUENCE [LARGE SCALE GENOMIC DNA]</scope>
    <source>
        <strain>RSA 493 / Nine Mile phase I</strain>
    </source>
</reference>
<accession>Q83AA8</accession>
<gene>
    <name evidence="1" type="primary">fmt</name>
    <name type="ordered locus">CBU_1997</name>
</gene>
<keyword id="KW-0002">3D-structure</keyword>
<keyword id="KW-0648">Protein biosynthesis</keyword>
<keyword id="KW-1185">Reference proteome</keyword>
<keyword id="KW-0808">Transferase</keyword>
<sequence>MSLKIVFAGTPQFAVPTLRALIDSSHRVLAVYTQPDRPSGRGQKIMESPVKEIARQNEIPIIQPFSLRDEVEQEKLIAMNADVMVVVAYGLILPKKALNAFRLGCVNVHASLLPRWRGAAPIQRAILAGDRETGISIMQMNEGLDTGDVLAKSACVISSEDTAADLHDRLSLIGADLLLESLAKLEKGDIKLEKQDEASATYASKIQKQEALIDWRKSAVEIARQVRAFNPTPIAFTYFEGQPMRIWRATVVDEKTDFEPGVLVDADKKGISIAAGSGILRLHQLQLPGKRVCSAGDFINAHGDKLIPGKTVFG</sequence>
<name>FMT_COXBU</name>
<evidence type="ECO:0000255" key="1">
    <source>
        <dbReference type="HAMAP-Rule" id="MF_00182"/>
    </source>
</evidence>
<evidence type="ECO:0007829" key="2">
    <source>
        <dbReference type="PDB" id="3TQQ"/>
    </source>
</evidence>
<protein>
    <recommendedName>
        <fullName evidence="1">Methionyl-tRNA formyltransferase</fullName>
        <ecNumber evidence="1">2.1.2.9</ecNumber>
    </recommendedName>
</protein>
<dbReference type="EC" id="2.1.2.9" evidence="1"/>
<dbReference type="EMBL" id="AE016828">
    <property type="protein sequence ID" value="AAO91486.1"/>
    <property type="molecule type" value="Genomic_DNA"/>
</dbReference>
<dbReference type="RefSeq" id="NP_820972.1">
    <property type="nucleotide sequence ID" value="NC_002971.4"/>
</dbReference>
<dbReference type="RefSeq" id="WP_010958586.1">
    <property type="nucleotide sequence ID" value="NZ_CCYB01000066.1"/>
</dbReference>
<dbReference type="PDB" id="3TQQ">
    <property type="method" value="X-ray"/>
    <property type="resolution" value="2.00 A"/>
    <property type="chains" value="A=1-314"/>
</dbReference>
<dbReference type="PDBsum" id="3TQQ"/>
<dbReference type="SMR" id="Q83AA8"/>
<dbReference type="STRING" id="227377.CBU_1997"/>
<dbReference type="DNASU" id="1209910"/>
<dbReference type="EnsemblBacteria" id="AAO91486">
    <property type="protein sequence ID" value="AAO91486"/>
    <property type="gene ID" value="CBU_1997"/>
</dbReference>
<dbReference type="GeneID" id="1209910"/>
<dbReference type="KEGG" id="cbu:CBU_1997"/>
<dbReference type="PATRIC" id="fig|227377.7.peg.1984"/>
<dbReference type="eggNOG" id="COG0223">
    <property type="taxonomic scope" value="Bacteria"/>
</dbReference>
<dbReference type="HOGENOM" id="CLU_033347_1_2_6"/>
<dbReference type="OrthoDB" id="9802815at2"/>
<dbReference type="EvolutionaryTrace" id="Q83AA8"/>
<dbReference type="Proteomes" id="UP000002671">
    <property type="component" value="Chromosome"/>
</dbReference>
<dbReference type="GO" id="GO:0005829">
    <property type="term" value="C:cytosol"/>
    <property type="evidence" value="ECO:0000318"/>
    <property type="project" value="GO_Central"/>
</dbReference>
<dbReference type="GO" id="GO:0004479">
    <property type="term" value="F:methionyl-tRNA formyltransferase activity"/>
    <property type="evidence" value="ECO:0000318"/>
    <property type="project" value="GO_Central"/>
</dbReference>
<dbReference type="GO" id="GO:0071951">
    <property type="term" value="P:conversion of methionyl-tRNA to N-formyl-methionyl-tRNA"/>
    <property type="evidence" value="ECO:0000318"/>
    <property type="project" value="GO_Central"/>
</dbReference>
<dbReference type="CDD" id="cd08646">
    <property type="entry name" value="FMT_core_Met-tRNA-FMT_N"/>
    <property type="match status" value="1"/>
</dbReference>
<dbReference type="CDD" id="cd08704">
    <property type="entry name" value="Met_tRNA_FMT_C"/>
    <property type="match status" value="1"/>
</dbReference>
<dbReference type="FunFam" id="3.40.50.12230:FF:000001">
    <property type="entry name" value="Methionyl-tRNA formyltransferase"/>
    <property type="match status" value="1"/>
</dbReference>
<dbReference type="FunFam" id="3.40.50.170:FF:000003">
    <property type="entry name" value="Methionyl-tRNA formyltransferase"/>
    <property type="match status" value="1"/>
</dbReference>
<dbReference type="Gene3D" id="3.10.25.10">
    <property type="entry name" value="Formyl transferase, C-terminal domain"/>
    <property type="match status" value="1"/>
</dbReference>
<dbReference type="Gene3D" id="3.40.50.170">
    <property type="entry name" value="Formyl transferase, N-terminal domain"/>
    <property type="match status" value="1"/>
</dbReference>
<dbReference type="HAMAP" id="MF_00182">
    <property type="entry name" value="Formyl_trans"/>
    <property type="match status" value="1"/>
</dbReference>
<dbReference type="InterPro" id="IPR005794">
    <property type="entry name" value="Fmt"/>
</dbReference>
<dbReference type="InterPro" id="IPR005793">
    <property type="entry name" value="Formyl_trans_C"/>
</dbReference>
<dbReference type="InterPro" id="IPR037022">
    <property type="entry name" value="Formyl_trans_C_sf"/>
</dbReference>
<dbReference type="InterPro" id="IPR002376">
    <property type="entry name" value="Formyl_transf_N"/>
</dbReference>
<dbReference type="InterPro" id="IPR036477">
    <property type="entry name" value="Formyl_transf_N_sf"/>
</dbReference>
<dbReference type="InterPro" id="IPR011034">
    <property type="entry name" value="Formyl_transferase-like_C_sf"/>
</dbReference>
<dbReference type="InterPro" id="IPR001555">
    <property type="entry name" value="GART_AS"/>
</dbReference>
<dbReference type="InterPro" id="IPR044135">
    <property type="entry name" value="Met-tRNA-FMT_C"/>
</dbReference>
<dbReference type="InterPro" id="IPR041711">
    <property type="entry name" value="Met-tRNA-FMT_N"/>
</dbReference>
<dbReference type="NCBIfam" id="TIGR00460">
    <property type="entry name" value="fmt"/>
    <property type="match status" value="1"/>
</dbReference>
<dbReference type="PANTHER" id="PTHR11138">
    <property type="entry name" value="METHIONYL-TRNA FORMYLTRANSFERASE"/>
    <property type="match status" value="1"/>
</dbReference>
<dbReference type="PANTHER" id="PTHR11138:SF5">
    <property type="entry name" value="METHIONYL-TRNA FORMYLTRANSFERASE, MITOCHONDRIAL"/>
    <property type="match status" value="1"/>
</dbReference>
<dbReference type="Pfam" id="PF02911">
    <property type="entry name" value="Formyl_trans_C"/>
    <property type="match status" value="1"/>
</dbReference>
<dbReference type="Pfam" id="PF00551">
    <property type="entry name" value="Formyl_trans_N"/>
    <property type="match status" value="1"/>
</dbReference>
<dbReference type="SUPFAM" id="SSF50486">
    <property type="entry name" value="FMT C-terminal domain-like"/>
    <property type="match status" value="1"/>
</dbReference>
<dbReference type="SUPFAM" id="SSF53328">
    <property type="entry name" value="Formyltransferase"/>
    <property type="match status" value="1"/>
</dbReference>
<dbReference type="PROSITE" id="PS00373">
    <property type="entry name" value="GART"/>
    <property type="match status" value="1"/>
</dbReference>